<reference key="1">
    <citation type="journal article" date="2008" name="J. Bacteriol.">
        <title>Comparative genome sequence analysis of multidrug-resistant Acinetobacter baumannii.</title>
        <authorList>
            <person name="Adams M.D."/>
            <person name="Goglin K."/>
            <person name="Molyneaux N."/>
            <person name="Hujer K.M."/>
            <person name="Lavender H."/>
            <person name="Jamison J.J."/>
            <person name="MacDonald I.J."/>
            <person name="Martin K.M."/>
            <person name="Russo T."/>
            <person name="Campagnari A.A."/>
            <person name="Hujer A.M."/>
            <person name="Bonomo R.A."/>
            <person name="Gill S.R."/>
        </authorList>
    </citation>
    <scope>NUCLEOTIDE SEQUENCE [LARGE SCALE GENOMIC DNA]</scope>
    <source>
        <strain>AB0057</strain>
    </source>
</reference>
<protein>
    <recommendedName>
        <fullName evidence="1">Iron-sulfur cluster insertion protein ErpA</fullName>
    </recommendedName>
</protein>
<feature type="chain" id="PRO_1000144886" description="Iron-sulfur cluster insertion protein ErpA">
    <location>
        <begin position="1"/>
        <end position="111"/>
    </location>
</feature>
<feature type="binding site" evidence="1">
    <location>
        <position position="39"/>
    </location>
    <ligand>
        <name>iron-sulfur cluster</name>
        <dbReference type="ChEBI" id="CHEBI:30408"/>
    </ligand>
</feature>
<feature type="binding site" evidence="1">
    <location>
        <position position="103"/>
    </location>
    <ligand>
        <name>iron-sulfur cluster</name>
        <dbReference type="ChEBI" id="CHEBI:30408"/>
    </ligand>
</feature>
<feature type="binding site" evidence="1">
    <location>
        <position position="105"/>
    </location>
    <ligand>
        <name>iron-sulfur cluster</name>
        <dbReference type="ChEBI" id="CHEBI:30408"/>
    </ligand>
</feature>
<name>ERPA_ACIB5</name>
<proteinExistence type="inferred from homology"/>
<evidence type="ECO:0000255" key="1">
    <source>
        <dbReference type="HAMAP-Rule" id="MF_01380"/>
    </source>
</evidence>
<dbReference type="EMBL" id="CP001182">
    <property type="protein sequence ID" value="ACJ39436.1"/>
    <property type="molecule type" value="Genomic_DNA"/>
</dbReference>
<dbReference type="RefSeq" id="WP_000993572.1">
    <property type="nucleotide sequence ID" value="NC_011586.2"/>
</dbReference>
<dbReference type="SMR" id="B7IAZ8"/>
<dbReference type="GeneID" id="92891930"/>
<dbReference type="KEGG" id="abn:AB57_0004"/>
<dbReference type="HOGENOM" id="CLU_069054_5_3_6"/>
<dbReference type="Proteomes" id="UP000007094">
    <property type="component" value="Chromosome"/>
</dbReference>
<dbReference type="GO" id="GO:0051537">
    <property type="term" value="F:2 iron, 2 sulfur cluster binding"/>
    <property type="evidence" value="ECO:0007669"/>
    <property type="project" value="TreeGrafter"/>
</dbReference>
<dbReference type="GO" id="GO:0051539">
    <property type="term" value="F:4 iron, 4 sulfur cluster binding"/>
    <property type="evidence" value="ECO:0007669"/>
    <property type="project" value="TreeGrafter"/>
</dbReference>
<dbReference type="GO" id="GO:0005506">
    <property type="term" value="F:iron ion binding"/>
    <property type="evidence" value="ECO:0007669"/>
    <property type="project" value="UniProtKB-UniRule"/>
</dbReference>
<dbReference type="GO" id="GO:0016226">
    <property type="term" value="P:iron-sulfur cluster assembly"/>
    <property type="evidence" value="ECO:0007669"/>
    <property type="project" value="UniProtKB-UniRule"/>
</dbReference>
<dbReference type="FunFam" id="2.60.300.12:FF:000002">
    <property type="entry name" value="Iron-sulfur cluster insertion protein ErpA"/>
    <property type="match status" value="1"/>
</dbReference>
<dbReference type="Gene3D" id="2.60.300.12">
    <property type="entry name" value="HesB-like domain"/>
    <property type="match status" value="1"/>
</dbReference>
<dbReference type="HAMAP" id="MF_01380">
    <property type="entry name" value="Fe_S_insert_ErpA"/>
    <property type="match status" value="1"/>
</dbReference>
<dbReference type="InterPro" id="IPR000361">
    <property type="entry name" value="FeS_biogenesis"/>
</dbReference>
<dbReference type="InterPro" id="IPR016092">
    <property type="entry name" value="FeS_cluster_insertion"/>
</dbReference>
<dbReference type="InterPro" id="IPR017870">
    <property type="entry name" value="FeS_cluster_insertion_CS"/>
</dbReference>
<dbReference type="InterPro" id="IPR023063">
    <property type="entry name" value="FeS_cluster_insertion_RrpA"/>
</dbReference>
<dbReference type="InterPro" id="IPR035903">
    <property type="entry name" value="HesB-like_dom_sf"/>
</dbReference>
<dbReference type="NCBIfam" id="TIGR00049">
    <property type="entry name" value="iron-sulfur cluster assembly accessory protein"/>
    <property type="match status" value="1"/>
</dbReference>
<dbReference type="NCBIfam" id="NF010147">
    <property type="entry name" value="PRK13623.1"/>
    <property type="match status" value="1"/>
</dbReference>
<dbReference type="PANTHER" id="PTHR43011">
    <property type="entry name" value="IRON-SULFUR CLUSTER ASSEMBLY 2 HOMOLOG, MITOCHONDRIAL"/>
    <property type="match status" value="1"/>
</dbReference>
<dbReference type="PANTHER" id="PTHR43011:SF1">
    <property type="entry name" value="IRON-SULFUR CLUSTER ASSEMBLY 2 HOMOLOG, MITOCHONDRIAL"/>
    <property type="match status" value="1"/>
</dbReference>
<dbReference type="Pfam" id="PF01521">
    <property type="entry name" value="Fe-S_biosyn"/>
    <property type="match status" value="1"/>
</dbReference>
<dbReference type="SUPFAM" id="SSF89360">
    <property type="entry name" value="HesB-like domain"/>
    <property type="match status" value="1"/>
</dbReference>
<dbReference type="PROSITE" id="PS01152">
    <property type="entry name" value="HESB"/>
    <property type="match status" value="1"/>
</dbReference>
<sequence>MNAQALVLTDNAANKVRQLRDSEGNDDLMLRVYVTGGGCSGFSYGFNFAESVNEDDAEFVNGDVKMLVDSLSYQYLVGSVVDYVEGLEGSRFIVQNPNATTTCGCGSSFSI</sequence>
<organism>
    <name type="scientific">Acinetobacter baumannii (strain AB0057)</name>
    <dbReference type="NCBI Taxonomy" id="480119"/>
    <lineage>
        <taxon>Bacteria</taxon>
        <taxon>Pseudomonadati</taxon>
        <taxon>Pseudomonadota</taxon>
        <taxon>Gammaproteobacteria</taxon>
        <taxon>Moraxellales</taxon>
        <taxon>Moraxellaceae</taxon>
        <taxon>Acinetobacter</taxon>
        <taxon>Acinetobacter calcoaceticus/baumannii complex</taxon>
    </lineage>
</organism>
<accession>B7IAZ8</accession>
<gene>
    <name evidence="1" type="primary">erpA</name>
    <name type="ordered locus">AB57_0004</name>
</gene>
<comment type="function">
    <text evidence="1">Required for insertion of 4Fe-4S clusters for at least IspG.</text>
</comment>
<comment type="cofactor">
    <cofactor evidence="1">
        <name>iron-sulfur cluster</name>
        <dbReference type="ChEBI" id="CHEBI:30408"/>
    </cofactor>
    <text evidence="1">Binds 1 iron-sulfur cluster per subunit.</text>
</comment>
<comment type="subunit">
    <text evidence="1">Homodimer.</text>
</comment>
<comment type="similarity">
    <text evidence="1">Belongs to the HesB/IscA family.</text>
</comment>
<keyword id="KW-0408">Iron</keyword>
<keyword id="KW-0411">Iron-sulfur</keyword>
<keyword id="KW-0479">Metal-binding</keyword>